<organism>
    <name type="scientific">Campylobacter concisus (strain 13826)</name>
    <dbReference type="NCBI Taxonomy" id="360104"/>
    <lineage>
        <taxon>Bacteria</taxon>
        <taxon>Pseudomonadati</taxon>
        <taxon>Campylobacterota</taxon>
        <taxon>Epsilonproteobacteria</taxon>
        <taxon>Campylobacterales</taxon>
        <taxon>Campylobacteraceae</taxon>
        <taxon>Campylobacter</taxon>
    </lineage>
</organism>
<reference key="1">
    <citation type="submission" date="2007-10" db="EMBL/GenBank/DDBJ databases">
        <title>Genome sequence of Campylobacter concisus 13826 isolated from human feces.</title>
        <authorList>
            <person name="Fouts D.E."/>
            <person name="Mongodin E.F."/>
            <person name="Puiu D."/>
            <person name="Sebastian Y."/>
            <person name="Miller W.G."/>
            <person name="Mandrell R.E."/>
            <person name="On S."/>
            <person name="Nelson K.E."/>
        </authorList>
    </citation>
    <scope>NUCLEOTIDE SEQUENCE [LARGE SCALE GENOMIC DNA]</scope>
    <source>
        <strain>13826</strain>
    </source>
</reference>
<accession>A7ZCB2</accession>
<evidence type="ECO:0000255" key="1">
    <source>
        <dbReference type="HAMAP-Rule" id="MF_01855"/>
    </source>
</evidence>
<protein>
    <recommendedName>
        <fullName evidence="1">Fructose-1,6-bisphosphatase class 1</fullName>
        <shortName evidence="1">FBPase class 1</shortName>
        <ecNumber evidence="1">3.1.3.11</ecNumber>
    </recommendedName>
    <alternativeName>
        <fullName evidence="1">D-fructose-1,6-bisphosphate 1-phosphohydrolase class 1</fullName>
    </alternativeName>
</protein>
<keyword id="KW-0119">Carbohydrate metabolism</keyword>
<keyword id="KW-0963">Cytoplasm</keyword>
<keyword id="KW-0378">Hydrolase</keyword>
<keyword id="KW-0460">Magnesium</keyword>
<keyword id="KW-0479">Metal-binding</keyword>
<dbReference type="EC" id="3.1.3.11" evidence="1"/>
<dbReference type="EMBL" id="CP000792">
    <property type="protein sequence ID" value="EAT99007.1"/>
    <property type="molecule type" value="Genomic_DNA"/>
</dbReference>
<dbReference type="RefSeq" id="WP_012001395.1">
    <property type="nucleotide sequence ID" value="NC_009802.2"/>
</dbReference>
<dbReference type="SMR" id="A7ZCB2"/>
<dbReference type="STRING" id="360104.CCC13826_1544"/>
<dbReference type="KEGG" id="cco:CCC13826_1544"/>
<dbReference type="eggNOG" id="COG0158">
    <property type="taxonomic scope" value="Bacteria"/>
</dbReference>
<dbReference type="HOGENOM" id="CLU_039977_0_0_7"/>
<dbReference type="UniPathway" id="UPA00138"/>
<dbReference type="Proteomes" id="UP000001121">
    <property type="component" value="Chromosome"/>
</dbReference>
<dbReference type="GO" id="GO:0005829">
    <property type="term" value="C:cytosol"/>
    <property type="evidence" value="ECO:0007669"/>
    <property type="project" value="TreeGrafter"/>
</dbReference>
<dbReference type="GO" id="GO:0042132">
    <property type="term" value="F:fructose 1,6-bisphosphate 1-phosphatase activity"/>
    <property type="evidence" value="ECO:0007669"/>
    <property type="project" value="UniProtKB-UniRule"/>
</dbReference>
<dbReference type="GO" id="GO:0000287">
    <property type="term" value="F:magnesium ion binding"/>
    <property type="evidence" value="ECO:0007669"/>
    <property type="project" value="UniProtKB-UniRule"/>
</dbReference>
<dbReference type="GO" id="GO:0030388">
    <property type="term" value="P:fructose 1,6-bisphosphate metabolic process"/>
    <property type="evidence" value="ECO:0007669"/>
    <property type="project" value="TreeGrafter"/>
</dbReference>
<dbReference type="GO" id="GO:0006002">
    <property type="term" value="P:fructose 6-phosphate metabolic process"/>
    <property type="evidence" value="ECO:0007669"/>
    <property type="project" value="TreeGrafter"/>
</dbReference>
<dbReference type="GO" id="GO:0006000">
    <property type="term" value="P:fructose metabolic process"/>
    <property type="evidence" value="ECO:0007669"/>
    <property type="project" value="TreeGrafter"/>
</dbReference>
<dbReference type="GO" id="GO:0006094">
    <property type="term" value="P:gluconeogenesis"/>
    <property type="evidence" value="ECO:0007669"/>
    <property type="project" value="UniProtKB-UniRule"/>
</dbReference>
<dbReference type="GO" id="GO:0005986">
    <property type="term" value="P:sucrose biosynthetic process"/>
    <property type="evidence" value="ECO:0007669"/>
    <property type="project" value="TreeGrafter"/>
</dbReference>
<dbReference type="Gene3D" id="3.40.190.80">
    <property type="match status" value="1"/>
</dbReference>
<dbReference type="Gene3D" id="3.30.540.10">
    <property type="entry name" value="Fructose-1,6-Bisphosphatase, subunit A, domain 1"/>
    <property type="match status" value="1"/>
</dbReference>
<dbReference type="HAMAP" id="MF_01855">
    <property type="entry name" value="FBPase_class1"/>
    <property type="match status" value="1"/>
</dbReference>
<dbReference type="InterPro" id="IPR044015">
    <property type="entry name" value="FBPase_C_dom"/>
</dbReference>
<dbReference type="InterPro" id="IPR000146">
    <property type="entry name" value="FBPase_class-1"/>
</dbReference>
<dbReference type="InterPro" id="IPR033391">
    <property type="entry name" value="FBPase_N"/>
</dbReference>
<dbReference type="InterPro" id="IPR028343">
    <property type="entry name" value="FBPtase"/>
</dbReference>
<dbReference type="InterPro" id="IPR023079">
    <property type="entry name" value="SBPase"/>
</dbReference>
<dbReference type="NCBIfam" id="NF006782">
    <property type="entry name" value="PRK09293.2-3"/>
    <property type="match status" value="1"/>
</dbReference>
<dbReference type="NCBIfam" id="NF006784">
    <property type="entry name" value="PRK09293.2-5"/>
    <property type="match status" value="1"/>
</dbReference>
<dbReference type="PANTHER" id="PTHR11556">
    <property type="entry name" value="FRUCTOSE-1,6-BISPHOSPHATASE-RELATED"/>
    <property type="match status" value="1"/>
</dbReference>
<dbReference type="PANTHER" id="PTHR11556:SF35">
    <property type="entry name" value="SEDOHEPTULOSE-1,7-BISPHOSPHATASE, CHLOROPLASTIC"/>
    <property type="match status" value="1"/>
</dbReference>
<dbReference type="Pfam" id="PF00316">
    <property type="entry name" value="FBPase"/>
    <property type="match status" value="1"/>
</dbReference>
<dbReference type="Pfam" id="PF18913">
    <property type="entry name" value="FBPase_C"/>
    <property type="match status" value="1"/>
</dbReference>
<dbReference type="PIRSF" id="PIRSF500210">
    <property type="entry name" value="FBPtase"/>
    <property type="match status" value="1"/>
</dbReference>
<dbReference type="PIRSF" id="PIRSF000904">
    <property type="entry name" value="FBPtase_SBPase"/>
    <property type="match status" value="1"/>
</dbReference>
<dbReference type="PRINTS" id="PR01958">
    <property type="entry name" value="S17BPHPHTASE"/>
</dbReference>
<dbReference type="SUPFAM" id="SSF56655">
    <property type="entry name" value="Carbohydrate phosphatase"/>
    <property type="match status" value="1"/>
</dbReference>
<gene>
    <name evidence="1" type="primary">fbp</name>
    <name type="ordered locus">Ccon26_05230</name>
    <name type="ORF">CCC13826_1544</name>
</gene>
<comment type="catalytic activity">
    <reaction evidence="1">
        <text>beta-D-fructose 1,6-bisphosphate + H2O = beta-D-fructose 6-phosphate + phosphate</text>
        <dbReference type="Rhea" id="RHEA:11064"/>
        <dbReference type="ChEBI" id="CHEBI:15377"/>
        <dbReference type="ChEBI" id="CHEBI:32966"/>
        <dbReference type="ChEBI" id="CHEBI:43474"/>
        <dbReference type="ChEBI" id="CHEBI:57634"/>
        <dbReference type="EC" id="3.1.3.11"/>
    </reaction>
</comment>
<comment type="cofactor">
    <cofactor evidence="1">
        <name>Mg(2+)</name>
        <dbReference type="ChEBI" id="CHEBI:18420"/>
    </cofactor>
    <text evidence="1">Binds 2 magnesium ions per subunit.</text>
</comment>
<comment type="pathway">
    <text evidence="1">Carbohydrate biosynthesis; gluconeogenesis.</text>
</comment>
<comment type="subunit">
    <text evidence="1">Homotetramer.</text>
</comment>
<comment type="subcellular location">
    <subcellularLocation>
        <location evidence="1">Cytoplasm</location>
    </subcellularLocation>
</comment>
<comment type="similarity">
    <text evidence="1">Belongs to the FBPase class 1 family.</text>
</comment>
<sequence length="287" mass="32398">MQELNQIFNTIKDIAKEISEVIKYADLGYTTHENATGDTQLKLDVKSDEIITAKFKQLSCVKALISEEKEDELEINKNAKFIIAYDPLDGSSLVDVNFAVGSIFGIYEDEVKPENLIAAAYSIYGPRLELVIAEKKGALPKFYRLGKDGEFKFVKELELKEKGKLNATGATQKGWSQTHRNFINELFNEGYRLRYSGAMVSDLHQILLKGGGLFSYPATSDHPNGKLRVVFEVLPFAFIYENAKGATTDGKNQTLFDIKIEKIHQTTPCFFGSRDEISLLHKFYEQK</sequence>
<name>F16PA_CAMC1</name>
<feature type="chain" id="PRO_0000364508" description="Fructose-1,6-bisphosphatase class 1">
    <location>
        <begin position="1"/>
        <end position="287"/>
    </location>
</feature>
<feature type="binding site" evidence="1">
    <location>
        <position position="67"/>
    </location>
    <ligand>
        <name>Mg(2+)</name>
        <dbReference type="ChEBI" id="CHEBI:18420"/>
        <label>1</label>
    </ligand>
</feature>
<feature type="binding site" evidence="1">
    <location>
        <position position="86"/>
    </location>
    <ligand>
        <name>Mg(2+)</name>
        <dbReference type="ChEBI" id="CHEBI:18420"/>
        <label>1</label>
    </ligand>
</feature>
<feature type="binding site" evidence="1">
    <location>
        <position position="86"/>
    </location>
    <ligand>
        <name>Mg(2+)</name>
        <dbReference type="ChEBI" id="CHEBI:18420"/>
        <label>2</label>
    </ligand>
</feature>
<feature type="binding site" evidence="1">
    <location>
        <position position="88"/>
    </location>
    <ligand>
        <name>Mg(2+)</name>
        <dbReference type="ChEBI" id="CHEBI:18420"/>
        <label>1</label>
    </ligand>
</feature>
<feature type="binding site" evidence="1">
    <location>
        <begin position="89"/>
        <end position="92"/>
    </location>
    <ligand>
        <name>substrate</name>
    </ligand>
</feature>
<feature type="binding site" evidence="1">
    <location>
        <position position="89"/>
    </location>
    <ligand>
        <name>Mg(2+)</name>
        <dbReference type="ChEBI" id="CHEBI:18420"/>
        <label>2</label>
    </ligand>
</feature>
<feature type="binding site" evidence="1">
    <location>
        <position position="195"/>
    </location>
    <ligand>
        <name>substrate</name>
    </ligand>
</feature>
<feature type="binding site" evidence="1">
    <location>
        <position position="226"/>
    </location>
    <ligand>
        <name>substrate</name>
    </ligand>
</feature>
<feature type="binding site" evidence="1">
    <location>
        <position position="232"/>
    </location>
    <ligand>
        <name>Mg(2+)</name>
        <dbReference type="ChEBI" id="CHEBI:18420"/>
        <label>2</label>
    </ligand>
</feature>
<proteinExistence type="inferred from homology"/>